<accession>P0CAV6</accession>
<accession>O87707</accession>
<keyword id="KW-1185">Reference proteome</keyword>
<name>CICA_CAUVC</name>
<gene>
    <name type="primary">cicA</name>
    <name type="ordered locus">CC_1962</name>
</gene>
<feature type="chain" id="PRO_0000089744" description="Protein CicA">
    <location>
        <begin position="1"/>
        <end position="222"/>
    </location>
</feature>
<dbReference type="EMBL" id="AE005673">
    <property type="protein sequence ID" value="AAK23937.1"/>
    <property type="status" value="ALT_INIT"/>
    <property type="molecule type" value="Genomic_DNA"/>
</dbReference>
<dbReference type="RefSeq" id="NP_420769.1">
    <property type="nucleotide sequence ID" value="NC_002696.2"/>
</dbReference>
<dbReference type="RefSeq" id="WP_012640373.1">
    <property type="nucleotide sequence ID" value="NC_002696.2"/>
</dbReference>
<dbReference type="SMR" id="P0CAV6"/>
<dbReference type="STRING" id="190650.CC_1962"/>
<dbReference type="EnsemblBacteria" id="AAK23937">
    <property type="protein sequence ID" value="AAK23937"/>
    <property type="gene ID" value="CC_1962"/>
</dbReference>
<dbReference type="KEGG" id="ccr:CC_1962"/>
<dbReference type="PATRIC" id="fig|190650.5.peg.1979"/>
<dbReference type="eggNOG" id="COG0560">
    <property type="taxonomic scope" value="Bacteria"/>
</dbReference>
<dbReference type="HOGENOM" id="CLU_052657_2_1_5"/>
<dbReference type="Proteomes" id="UP000001816">
    <property type="component" value="Chromosome"/>
</dbReference>
<dbReference type="CDD" id="cd02612">
    <property type="entry name" value="HAD_PGPPase"/>
    <property type="match status" value="1"/>
</dbReference>
<dbReference type="Gene3D" id="3.40.50.1000">
    <property type="entry name" value="HAD superfamily/HAD-like"/>
    <property type="match status" value="1"/>
</dbReference>
<dbReference type="Gene3D" id="1.20.1440.100">
    <property type="entry name" value="SG protein - dephosphorylation function"/>
    <property type="match status" value="1"/>
</dbReference>
<dbReference type="InterPro" id="IPR050582">
    <property type="entry name" value="HAD-like_SerB"/>
</dbReference>
<dbReference type="InterPro" id="IPR036412">
    <property type="entry name" value="HAD-like_sf"/>
</dbReference>
<dbReference type="InterPro" id="IPR006385">
    <property type="entry name" value="HAD_hydro_SerB1"/>
</dbReference>
<dbReference type="InterPro" id="IPR023214">
    <property type="entry name" value="HAD_sf"/>
</dbReference>
<dbReference type="NCBIfam" id="TIGR01488">
    <property type="entry name" value="HAD-SF-IB"/>
    <property type="match status" value="1"/>
</dbReference>
<dbReference type="NCBIfam" id="TIGR01490">
    <property type="entry name" value="HAD-SF-IB-hyp1"/>
    <property type="match status" value="1"/>
</dbReference>
<dbReference type="PANTHER" id="PTHR43344">
    <property type="entry name" value="PHOSPHOSERINE PHOSPHATASE"/>
    <property type="match status" value="1"/>
</dbReference>
<dbReference type="Pfam" id="PF12710">
    <property type="entry name" value="HAD"/>
    <property type="match status" value="1"/>
</dbReference>
<dbReference type="SUPFAM" id="SSF56784">
    <property type="entry name" value="HAD-like"/>
    <property type="match status" value="1"/>
</dbReference>
<proteinExistence type="predicted"/>
<reference key="1">
    <citation type="journal article" date="2001" name="Proc. Natl. Acad. Sci. U.S.A.">
        <title>Complete genome sequence of Caulobacter crescentus.</title>
        <authorList>
            <person name="Nierman W.C."/>
            <person name="Feldblyum T.V."/>
            <person name="Laub M.T."/>
            <person name="Paulsen I.T."/>
            <person name="Nelson K.E."/>
            <person name="Eisen J.A."/>
            <person name="Heidelberg J.F."/>
            <person name="Alley M.R.K."/>
            <person name="Ohta N."/>
            <person name="Maddock J.R."/>
            <person name="Potocka I."/>
            <person name="Nelson W.C."/>
            <person name="Newton A."/>
            <person name="Stephens C."/>
            <person name="Phadke N.D."/>
            <person name="Ely B."/>
            <person name="DeBoy R.T."/>
            <person name="Dodson R.J."/>
            <person name="Durkin A.S."/>
            <person name="Gwinn M.L."/>
            <person name="Haft D.H."/>
            <person name="Kolonay J.F."/>
            <person name="Smit J."/>
            <person name="Craven M.B."/>
            <person name="Khouri H.M."/>
            <person name="Shetty J."/>
            <person name="Berry K.J."/>
            <person name="Utterback T.R."/>
            <person name="Tran K."/>
            <person name="Wolf A.M."/>
            <person name="Vamathevan J.J."/>
            <person name="Ermolaeva M.D."/>
            <person name="White O."/>
            <person name="Salzberg S.L."/>
            <person name="Venter J.C."/>
            <person name="Shapiro L."/>
            <person name="Fraser C.M."/>
        </authorList>
    </citation>
    <scope>NUCLEOTIDE SEQUENCE [LARGE SCALE GENOMIC DNA]</scope>
    <source>
        <strain>ATCC 19089 / CIP 103742 / CB 15</strain>
    </source>
</reference>
<sequence>MAKRSWMAKGLSASRPMTGEMGHEPLLVAFDFDGTLTVKDSFNAFLKWRAGPRWSFGVLRLTPALIAYVFDRNRGKLKAAAVRQFLKGATVAQIENDARAFAEAFAPSLLRPDAVAVWRGWRAKGAKMVIVTASPDLIVAPFARGLGADLLIGTRLRCSDDGRILGGLDGNNCRAKEKVIRLREVFGPDVRLTAAYGDTSGDTEMLAIADEKGYRIFRGKPA</sequence>
<comment type="sequence caution" evidence="1">
    <conflict type="erroneous initiation">
        <sequence resource="EMBL-CDS" id="AAK23937"/>
    </conflict>
</comment>
<organism>
    <name type="scientific">Caulobacter vibrioides (strain ATCC 19089 / CIP 103742 / CB 15)</name>
    <name type="common">Caulobacter crescentus</name>
    <dbReference type="NCBI Taxonomy" id="190650"/>
    <lineage>
        <taxon>Bacteria</taxon>
        <taxon>Pseudomonadati</taxon>
        <taxon>Pseudomonadota</taxon>
        <taxon>Alphaproteobacteria</taxon>
        <taxon>Caulobacterales</taxon>
        <taxon>Caulobacteraceae</taxon>
        <taxon>Caulobacter</taxon>
    </lineage>
</organism>
<evidence type="ECO:0000305" key="1"/>
<protein>
    <recommendedName>
        <fullName>Protein CicA</fullName>
    </recommendedName>
</protein>